<feature type="chain" id="PRO_0000263538" description="Small ribosomal subunit protein uS12">
    <location>
        <begin position="1"/>
        <end position="142"/>
    </location>
</feature>
<feature type="region of interest" description="Disordered" evidence="2">
    <location>
        <begin position="1"/>
        <end position="44"/>
    </location>
</feature>
<feature type="compositionally biased region" description="Basic and acidic residues" evidence="2">
    <location>
        <begin position="11"/>
        <end position="32"/>
    </location>
</feature>
<accession>Q18EX9</accession>
<comment type="function">
    <text evidence="1">With S4 and S5 plays an important role in translational accuracy. Located at the interface of the 30S and 50S subunits.</text>
</comment>
<comment type="subunit">
    <text evidence="1">Part of the 30S ribosomal subunit.</text>
</comment>
<comment type="similarity">
    <text evidence="1">Belongs to the universal ribosomal protein uS12 family.</text>
</comment>
<dbReference type="EMBL" id="AM180088">
    <property type="protein sequence ID" value="CAJ53488.1"/>
    <property type="molecule type" value="Genomic_DNA"/>
</dbReference>
<dbReference type="RefSeq" id="WP_011572585.1">
    <property type="nucleotide sequence ID" value="NC_008212.1"/>
</dbReference>
<dbReference type="SMR" id="Q18EX9"/>
<dbReference type="STRING" id="362976.HQ_3391A"/>
<dbReference type="GeneID" id="4194648"/>
<dbReference type="KEGG" id="hwa:HQ_3391A"/>
<dbReference type="eggNOG" id="arCOG04255">
    <property type="taxonomic scope" value="Archaea"/>
</dbReference>
<dbReference type="HOGENOM" id="CLU_115574_0_1_2"/>
<dbReference type="Proteomes" id="UP000001975">
    <property type="component" value="Chromosome"/>
</dbReference>
<dbReference type="GO" id="GO:0015935">
    <property type="term" value="C:small ribosomal subunit"/>
    <property type="evidence" value="ECO:0007669"/>
    <property type="project" value="InterPro"/>
</dbReference>
<dbReference type="GO" id="GO:0019843">
    <property type="term" value="F:rRNA binding"/>
    <property type="evidence" value="ECO:0007669"/>
    <property type="project" value="UniProtKB-UniRule"/>
</dbReference>
<dbReference type="GO" id="GO:0003735">
    <property type="term" value="F:structural constituent of ribosome"/>
    <property type="evidence" value="ECO:0007669"/>
    <property type="project" value="InterPro"/>
</dbReference>
<dbReference type="GO" id="GO:0006412">
    <property type="term" value="P:translation"/>
    <property type="evidence" value="ECO:0007669"/>
    <property type="project" value="UniProtKB-UniRule"/>
</dbReference>
<dbReference type="CDD" id="cd03367">
    <property type="entry name" value="Ribosomal_S23"/>
    <property type="match status" value="1"/>
</dbReference>
<dbReference type="FunFam" id="2.40.50.140:FF:000007">
    <property type="entry name" value="40S ribosomal protein S23"/>
    <property type="match status" value="1"/>
</dbReference>
<dbReference type="Gene3D" id="2.40.50.140">
    <property type="entry name" value="Nucleic acid-binding proteins"/>
    <property type="match status" value="1"/>
</dbReference>
<dbReference type="HAMAP" id="MF_00403_A">
    <property type="entry name" value="Ribosomal_uS12_A"/>
    <property type="match status" value="1"/>
</dbReference>
<dbReference type="InterPro" id="IPR012340">
    <property type="entry name" value="NA-bd_OB-fold"/>
</dbReference>
<dbReference type="InterPro" id="IPR006032">
    <property type="entry name" value="Ribosomal_uS12"/>
</dbReference>
<dbReference type="InterPro" id="IPR022863">
    <property type="entry name" value="Ribosomal_uS12_arc"/>
</dbReference>
<dbReference type="InterPro" id="IPR005680">
    <property type="entry name" value="Ribosomal_uS12_euk/arc"/>
</dbReference>
<dbReference type="NCBIfam" id="NF003254">
    <property type="entry name" value="PRK04211.1"/>
    <property type="match status" value="1"/>
</dbReference>
<dbReference type="NCBIfam" id="TIGR00982">
    <property type="entry name" value="uS12_E_A"/>
    <property type="match status" value="1"/>
</dbReference>
<dbReference type="PANTHER" id="PTHR11652">
    <property type="entry name" value="30S RIBOSOMAL PROTEIN S12 FAMILY MEMBER"/>
    <property type="match status" value="1"/>
</dbReference>
<dbReference type="Pfam" id="PF00164">
    <property type="entry name" value="Ribosom_S12_S23"/>
    <property type="match status" value="1"/>
</dbReference>
<dbReference type="PIRSF" id="PIRSF002133">
    <property type="entry name" value="Ribosomal_S12/S23"/>
    <property type="match status" value="1"/>
</dbReference>
<dbReference type="SUPFAM" id="SSF50249">
    <property type="entry name" value="Nucleic acid-binding proteins"/>
    <property type="match status" value="1"/>
</dbReference>
<dbReference type="PROSITE" id="PS00055">
    <property type="entry name" value="RIBOSOMAL_S12"/>
    <property type="match status" value="1"/>
</dbReference>
<keyword id="KW-1185">Reference proteome</keyword>
<keyword id="KW-0687">Ribonucleoprotein</keyword>
<keyword id="KW-0689">Ribosomal protein</keyword>
<keyword id="KW-0694">RNA-binding</keyword>
<keyword id="KW-0699">rRNA-binding</keyword>
<gene>
    <name evidence="1" type="primary">rps12</name>
    <name type="ordered locus">HQ_3391A</name>
</gene>
<protein>
    <recommendedName>
        <fullName evidence="1">Small ribosomal subunit protein uS12</fullName>
    </recommendedName>
    <alternativeName>
        <fullName evidence="3">30S ribosomal protein S12</fullName>
    </alternativeName>
</protein>
<organism>
    <name type="scientific">Haloquadratum walsbyi (strain DSM 16790 / HBSQ001)</name>
    <dbReference type="NCBI Taxonomy" id="362976"/>
    <lineage>
        <taxon>Archaea</taxon>
        <taxon>Methanobacteriati</taxon>
        <taxon>Methanobacteriota</taxon>
        <taxon>Stenosarchaea group</taxon>
        <taxon>Halobacteria</taxon>
        <taxon>Halobacteriales</taxon>
        <taxon>Haloferacaceae</taxon>
        <taxon>Haloquadratum</taxon>
    </lineage>
</organism>
<evidence type="ECO:0000255" key="1">
    <source>
        <dbReference type="HAMAP-Rule" id="MF_00403"/>
    </source>
</evidence>
<evidence type="ECO:0000256" key="2">
    <source>
        <dbReference type="SAM" id="MobiDB-lite"/>
    </source>
</evidence>
<evidence type="ECO:0000305" key="3"/>
<sequence length="142" mass="15402">MANGKYAARKLKQDRQQRRWSDSEYARRERGLGAKSDPLEGAPQGRGIVLEKVGIEAKQPNSAIRKCVRVQLIKNGKQVTAFCPGDGAISFIDEHDEVTIAGIGGAKGRAMGDLSGVNYKVEKVNGVSLIELVRGNAEKPVR</sequence>
<reference key="1">
    <citation type="journal article" date="2006" name="BMC Genomics">
        <title>The genome of the square archaeon Haloquadratum walsbyi: life at the limits of water activity.</title>
        <authorList>
            <person name="Bolhuis H."/>
            <person name="Palm P."/>
            <person name="Wende A."/>
            <person name="Falb M."/>
            <person name="Rampp M."/>
            <person name="Rodriguez-Valera F."/>
            <person name="Pfeiffer F."/>
            <person name="Oesterhelt D."/>
        </authorList>
    </citation>
    <scope>NUCLEOTIDE SEQUENCE [LARGE SCALE GENOMIC DNA]</scope>
    <source>
        <strain>DSM 16790 / HBSQ001</strain>
    </source>
</reference>
<name>RS12_HALWD</name>
<proteinExistence type="inferred from homology"/>